<organism>
    <name type="scientific">Shewanella loihica (strain ATCC BAA-1088 / PV-4)</name>
    <dbReference type="NCBI Taxonomy" id="323850"/>
    <lineage>
        <taxon>Bacteria</taxon>
        <taxon>Pseudomonadati</taxon>
        <taxon>Pseudomonadota</taxon>
        <taxon>Gammaproteobacteria</taxon>
        <taxon>Alteromonadales</taxon>
        <taxon>Shewanellaceae</taxon>
        <taxon>Shewanella</taxon>
    </lineage>
</organism>
<gene>
    <name evidence="1" type="primary">leuC</name>
    <name type="ordered locus">Shew_3470</name>
</gene>
<name>LEUC_SHELP</name>
<dbReference type="EC" id="4.2.1.33" evidence="1"/>
<dbReference type="EMBL" id="CP000606">
    <property type="protein sequence ID" value="ABO25336.1"/>
    <property type="molecule type" value="Genomic_DNA"/>
</dbReference>
<dbReference type="RefSeq" id="WP_011867266.1">
    <property type="nucleotide sequence ID" value="NC_009092.1"/>
</dbReference>
<dbReference type="SMR" id="A3QIN8"/>
<dbReference type="STRING" id="323850.Shew_3470"/>
<dbReference type="KEGG" id="slo:Shew_3470"/>
<dbReference type="eggNOG" id="COG0065">
    <property type="taxonomic scope" value="Bacteria"/>
</dbReference>
<dbReference type="HOGENOM" id="CLU_006714_3_4_6"/>
<dbReference type="OrthoDB" id="9802769at2"/>
<dbReference type="UniPathway" id="UPA00048">
    <property type="reaction ID" value="UER00071"/>
</dbReference>
<dbReference type="Proteomes" id="UP000001558">
    <property type="component" value="Chromosome"/>
</dbReference>
<dbReference type="GO" id="GO:0003861">
    <property type="term" value="F:3-isopropylmalate dehydratase activity"/>
    <property type="evidence" value="ECO:0007669"/>
    <property type="project" value="UniProtKB-UniRule"/>
</dbReference>
<dbReference type="GO" id="GO:0051539">
    <property type="term" value="F:4 iron, 4 sulfur cluster binding"/>
    <property type="evidence" value="ECO:0007669"/>
    <property type="project" value="UniProtKB-KW"/>
</dbReference>
<dbReference type="GO" id="GO:0046872">
    <property type="term" value="F:metal ion binding"/>
    <property type="evidence" value="ECO:0007669"/>
    <property type="project" value="UniProtKB-KW"/>
</dbReference>
<dbReference type="GO" id="GO:0009098">
    <property type="term" value="P:L-leucine biosynthetic process"/>
    <property type="evidence" value="ECO:0007669"/>
    <property type="project" value="UniProtKB-UniRule"/>
</dbReference>
<dbReference type="CDD" id="cd01583">
    <property type="entry name" value="IPMI"/>
    <property type="match status" value="1"/>
</dbReference>
<dbReference type="FunFam" id="3.30.499.10:FF:000006">
    <property type="entry name" value="3-isopropylmalate dehydratase large subunit"/>
    <property type="match status" value="1"/>
</dbReference>
<dbReference type="FunFam" id="3.30.499.10:FF:000007">
    <property type="entry name" value="3-isopropylmalate dehydratase large subunit"/>
    <property type="match status" value="1"/>
</dbReference>
<dbReference type="Gene3D" id="3.30.499.10">
    <property type="entry name" value="Aconitase, domain 3"/>
    <property type="match status" value="2"/>
</dbReference>
<dbReference type="HAMAP" id="MF_01026">
    <property type="entry name" value="LeuC_type1"/>
    <property type="match status" value="1"/>
</dbReference>
<dbReference type="InterPro" id="IPR004430">
    <property type="entry name" value="3-IsopropMal_deHydase_lsu"/>
</dbReference>
<dbReference type="InterPro" id="IPR015931">
    <property type="entry name" value="Acnase/IPM_dHydase_lsu_aba_1/3"/>
</dbReference>
<dbReference type="InterPro" id="IPR001030">
    <property type="entry name" value="Acoase/IPM_deHydtase_lsu_aba"/>
</dbReference>
<dbReference type="InterPro" id="IPR018136">
    <property type="entry name" value="Aconitase_4Fe-4S_BS"/>
</dbReference>
<dbReference type="InterPro" id="IPR036008">
    <property type="entry name" value="Aconitase_4Fe-4S_dom"/>
</dbReference>
<dbReference type="InterPro" id="IPR050067">
    <property type="entry name" value="IPM_dehydratase_rel_enz"/>
</dbReference>
<dbReference type="InterPro" id="IPR033941">
    <property type="entry name" value="IPMI_cat"/>
</dbReference>
<dbReference type="NCBIfam" id="TIGR00170">
    <property type="entry name" value="leuC"/>
    <property type="match status" value="1"/>
</dbReference>
<dbReference type="NCBIfam" id="NF004016">
    <property type="entry name" value="PRK05478.1"/>
    <property type="match status" value="1"/>
</dbReference>
<dbReference type="NCBIfam" id="NF009116">
    <property type="entry name" value="PRK12466.1"/>
    <property type="match status" value="1"/>
</dbReference>
<dbReference type="PANTHER" id="PTHR43822:SF9">
    <property type="entry name" value="3-ISOPROPYLMALATE DEHYDRATASE"/>
    <property type="match status" value="1"/>
</dbReference>
<dbReference type="PANTHER" id="PTHR43822">
    <property type="entry name" value="HOMOACONITASE, MITOCHONDRIAL-RELATED"/>
    <property type="match status" value="1"/>
</dbReference>
<dbReference type="Pfam" id="PF00330">
    <property type="entry name" value="Aconitase"/>
    <property type="match status" value="1"/>
</dbReference>
<dbReference type="PRINTS" id="PR00415">
    <property type="entry name" value="ACONITASE"/>
</dbReference>
<dbReference type="SUPFAM" id="SSF53732">
    <property type="entry name" value="Aconitase iron-sulfur domain"/>
    <property type="match status" value="1"/>
</dbReference>
<dbReference type="PROSITE" id="PS00450">
    <property type="entry name" value="ACONITASE_1"/>
    <property type="match status" value="1"/>
</dbReference>
<dbReference type="PROSITE" id="PS01244">
    <property type="entry name" value="ACONITASE_2"/>
    <property type="match status" value="1"/>
</dbReference>
<feature type="chain" id="PRO_1000063605" description="3-isopropylmalate dehydratase large subunit">
    <location>
        <begin position="1"/>
        <end position="466"/>
    </location>
</feature>
<feature type="binding site" evidence="1">
    <location>
        <position position="347"/>
    </location>
    <ligand>
        <name>[4Fe-4S] cluster</name>
        <dbReference type="ChEBI" id="CHEBI:49883"/>
    </ligand>
</feature>
<feature type="binding site" evidence="1">
    <location>
        <position position="407"/>
    </location>
    <ligand>
        <name>[4Fe-4S] cluster</name>
        <dbReference type="ChEBI" id="CHEBI:49883"/>
    </ligand>
</feature>
<feature type="binding site" evidence="1">
    <location>
        <position position="410"/>
    </location>
    <ligand>
        <name>[4Fe-4S] cluster</name>
        <dbReference type="ChEBI" id="CHEBI:49883"/>
    </ligand>
</feature>
<sequence length="466" mass="49734">MAKTLYEKVWDSHIVAAPEGEAPLIYVDRHLVHEVTSPQAFSGLKVAGRKLRAPEKTFATMDHNTSTKSASLDALSPMARTQVETLAQNCKEFGVRLYDIHHKNQGIVHVMGPELGITLPGTVIVCGDSHTATHGAFGALAFGIGTSEVEHVMATQTLRQLKAKTMKIEVRGLVADGITAKDIVLAIIGKIGMDGGTGYVVEFCGEAIAALSMEGRMTVCNMAIEMGAKAGMIAPDQTTIDYLEGREFAPKGEAWQQAVAAWKALKSDEDAMFDAHVVLEASDIAPQLTWGTNPGQVVAIDQCVPNPEDETNPTVKASIEKALDYVALTPGTQMTDVSINKVFIGSCTNSRIEDLRSAAQQAKGRKVAAGVTAIVVPGSGLVKEQAEAEGLDKIFIDAGFEWRLPGCSMCLAMNDDRLEAGDRCASTSNRNFEGRQGRGSRTHLVSPAMAAAAAIAGHFVDIRKPY</sequence>
<evidence type="ECO:0000255" key="1">
    <source>
        <dbReference type="HAMAP-Rule" id="MF_01026"/>
    </source>
</evidence>
<reference key="1">
    <citation type="submission" date="2007-03" db="EMBL/GenBank/DDBJ databases">
        <title>Complete sequence of Shewanella loihica PV-4.</title>
        <authorList>
            <consortium name="US DOE Joint Genome Institute"/>
            <person name="Copeland A."/>
            <person name="Lucas S."/>
            <person name="Lapidus A."/>
            <person name="Barry K."/>
            <person name="Detter J.C."/>
            <person name="Glavina del Rio T."/>
            <person name="Hammon N."/>
            <person name="Israni S."/>
            <person name="Dalin E."/>
            <person name="Tice H."/>
            <person name="Pitluck S."/>
            <person name="Chain P."/>
            <person name="Malfatti S."/>
            <person name="Shin M."/>
            <person name="Vergez L."/>
            <person name="Schmutz J."/>
            <person name="Larimer F."/>
            <person name="Land M."/>
            <person name="Hauser L."/>
            <person name="Kyrpides N."/>
            <person name="Mikhailova N."/>
            <person name="Romine M.F."/>
            <person name="Serres G."/>
            <person name="Fredrickson J."/>
            <person name="Tiedje J."/>
            <person name="Richardson P."/>
        </authorList>
    </citation>
    <scope>NUCLEOTIDE SEQUENCE [LARGE SCALE GENOMIC DNA]</scope>
    <source>
        <strain>ATCC BAA-1088 / PV-4</strain>
    </source>
</reference>
<proteinExistence type="inferred from homology"/>
<keyword id="KW-0004">4Fe-4S</keyword>
<keyword id="KW-0028">Amino-acid biosynthesis</keyword>
<keyword id="KW-0100">Branched-chain amino acid biosynthesis</keyword>
<keyword id="KW-0408">Iron</keyword>
<keyword id="KW-0411">Iron-sulfur</keyword>
<keyword id="KW-0432">Leucine biosynthesis</keyword>
<keyword id="KW-0456">Lyase</keyword>
<keyword id="KW-0479">Metal-binding</keyword>
<keyword id="KW-1185">Reference proteome</keyword>
<accession>A3QIN8</accession>
<protein>
    <recommendedName>
        <fullName evidence="1">3-isopropylmalate dehydratase large subunit</fullName>
        <ecNumber evidence="1">4.2.1.33</ecNumber>
    </recommendedName>
    <alternativeName>
        <fullName evidence="1">Alpha-IPM isomerase</fullName>
        <shortName evidence="1">IPMI</shortName>
    </alternativeName>
    <alternativeName>
        <fullName evidence="1">Isopropylmalate isomerase</fullName>
    </alternativeName>
</protein>
<comment type="function">
    <text evidence="1">Catalyzes the isomerization between 2-isopropylmalate and 3-isopropylmalate, via the formation of 2-isopropylmaleate.</text>
</comment>
<comment type="catalytic activity">
    <reaction evidence="1">
        <text>(2R,3S)-3-isopropylmalate = (2S)-2-isopropylmalate</text>
        <dbReference type="Rhea" id="RHEA:32287"/>
        <dbReference type="ChEBI" id="CHEBI:1178"/>
        <dbReference type="ChEBI" id="CHEBI:35121"/>
        <dbReference type="EC" id="4.2.1.33"/>
    </reaction>
</comment>
<comment type="cofactor">
    <cofactor evidence="1">
        <name>[4Fe-4S] cluster</name>
        <dbReference type="ChEBI" id="CHEBI:49883"/>
    </cofactor>
    <text evidence="1">Binds 1 [4Fe-4S] cluster per subunit.</text>
</comment>
<comment type="pathway">
    <text evidence="1">Amino-acid biosynthesis; L-leucine biosynthesis; L-leucine from 3-methyl-2-oxobutanoate: step 2/4.</text>
</comment>
<comment type="subunit">
    <text evidence="1">Heterodimer of LeuC and LeuD.</text>
</comment>
<comment type="similarity">
    <text evidence="1">Belongs to the aconitase/IPM isomerase family. LeuC type 1 subfamily.</text>
</comment>